<accession>A1ARX8</accession>
<feature type="chain" id="PRO_0000303470" description="tRNA N6-adenosine threonylcarbamoyltransferase">
    <location>
        <begin position="1"/>
        <end position="340"/>
    </location>
</feature>
<feature type="binding site" evidence="1">
    <location>
        <position position="111"/>
    </location>
    <ligand>
        <name>Fe cation</name>
        <dbReference type="ChEBI" id="CHEBI:24875"/>
    </ligand>
</feature>
<feature type="binding site" evidence="1">
    <location>
        <position position="115"/>
    </location>
    <ligand>
        <name>Fe cation</name>
        <dbReference type="ChEBI" id="CHEBI:24875"/>
    </ligand>
</feature>
<feature type="binding site" evidence="1">
    <location>
        <begin position="133"/>
        <end position="137"/>
    </location>
    <ligand>
        <name>substrate</name>
    </ligand>
</feature>
<feature type="binding site" evidence="1">
    <location>
        <position position="166"/>
    </location>
    <ligand>
        <name>substrate</name>
    </ligand>
</feature>
<feature type="binding site" evidence="1">
    <location>
        <position position="179"/>
    </location>
    <ligand>
        <name>substrate</name>
    </ligand>
</feature>
<feature type="binding site" evidence="1">
    <location>
        <position position="183"/>
    </location>
    <ligand>
        <name>substrate</name>
    </ligand>
</feature>
<feature type="binding site" evidence="1">
    <location>
        <position position="273"/>
    </location>
    <ligand>
        <name>substrate</name>
    </ligand>
</feature>
<feature type="binding site" evidence="1">
    <location>
        <position position="301"/>
    </location>
    <ligand>
        <name>Fe cation</name>
        <dbReference type="ChEBI" id="CHEBI:24875"/>
    </ligand>
</feature>
<protein>
    <recommendedName>
        <fullName evidence="1">tRNA N6-adenosine threonylcarbamoyltransferase</fullName>
        <ecNumber evidence="1">2.3.1.234</ecNumber>
    </recommendedName>
    <alternativeName>
        <fullName evidence="1">N6-L-threonylcarbamoyladenine synthase</fullName>
        <shortName evidence="1">t(6)A synthase</shortName>
    </alternativeName>
    <alternativeName>
        <fullName evidence="1">t(6)A37 threonylcarbamoyladenosine biosynthesis protein TsaD</fullName>
    </alternativeName>
    <alternativeName>
        <fullName evidence="1">tRNA threonylcarbamoyladenosine biosynthesis protein TsaD</fullName>
    </alternativeName>
</protein>
<gene>
    <name evidence="1" type="primary">tsaD</name>
    <name type="synonym">gcp</name>
    <name type="ordered locus">Ppro_2493</name>
</gene>
<name>TSAD_PELPD</name>
<dbReference type="EC" id="2.3.1.234" evidence="1"/>
<dbReference type="EMBL" id="CP000482">
    <property type="protein sequence ID" value="ABL00099.1"/>
    <property type="molecule type" value="Genomic_DNA"/>
</dbReference>
<dbReference type="RefSeq" id="WP_011736354.1">
    <property type="nucleotide sequence ID" value="NC_008609.1"/>
</dbReference>
<dbReference type="SMR" id="A1ARX8"/>
<dbReference type="STRING" id="338966.Ppro_2493"/>
<dbReference type="KEGG" id="ppd:Ppro_2493"/>
<dbReference type="eggNOG" id="COG0533">
    <property type="taxonomic scope" value="Bacteria"/>
</dbReference>
<dbReference type="HOGENOM" id="CLU_023208_0_2_7"/>
<dbReference type="OrthoDB" id="9806197at2"/>
<dbReference type="Proteomes" id="UP000006732">
    <property type="component" value="Chromosome"/>
</dbReference>
<dbReference type="GO" id="GO:0005737">
    <property type="term" value="C:cytoplasm"/>
    <property type="evidence" value="ECO:0007669"/>
    <property type="project" value="UniProtKB-SubCell"/>
</dbReference>
<dbReference type="GO" id="GO:0005506">
    <property type="term" value="F:iron ion binding"/>
    <property type="evidence" value="ECO:0007669"/>
    <property type="project" value="UniProtKB-UniRule"/>
</dbReference>
<dbReference type="GO" id="GO:0061711">
    <property type="term" value="F:N(6)-L-threonylcarbamoyladenine synthase activity"/>
    <property type="evidence" value="ECO:0007669"/>
    <property type="project" value="UniProtKB-EC"/>
</dbReference>
<dbReference type="GO" id="GO:0002949">
    <property type="term" value="P:tRNA threonylcarbamoyladenosine modification"/>
    <property type="evidence" value="ECO:0007669"/>
    <property type="project" value="UniProtKB-UniRule"/>
</dbReference>
<dbReference type="CDD" id="cd24133">
    <property type="entry name" value="ASKHA_NBD_TsaD_bac"/>
    <property type="match status" value="1"/>
</dbReference>
<dbReference type="FunFam" id="3.30.420.40:FF:000012">
    <property type="entry name" value="tRNA N6-adenosine threonylcarbamoyltransferase"/>
    <property type="match status" value="1"/>
</dbReference>
<dbReference type="FunFam" id="3.30.420.40:FF:000040">
    <property type="entry name" value="tRNA N6-adenosine threonylcarbamoyltransferase"/>
    <property type="match status" value="1"/>
</dbReference>
<dbReference type="Gene3D" id="3.30.420.40">
    <property type="match status" value="2"/>
</dbReference>
<dbReference type="HAMAP" id="MF_01445">
    <property type="entry name" value="TsaD"/>
    <property type="match status" value="1"/>
</dbReference>
<dbReference type="InterPro" id="IPR043129">
    <property type="entry name" value="ATPase_NBD"/>
</dbReference>
<dbReference type="InterPro" id="IPR000905">
    <property type="entry name" value="Gcp-like_dom"/>
</dbReference>
<dbReference type="InterPro" id="IPR017861">
    <property type="entry name" value="KAE1/TsaD"/>
</dbReference>
<dbReference type="InterPro" id="IPR022450">
    <property type="entry name" value="TsaD"/>
</dbReference>
<dbReference type="NCBIfam" id="TIGR00329">
    <property type="entry name" value="gcp_kae1"/>
    <property type="match status" value="1"/>
</dbReference>
<dbReference type="NCBIfam" id="TIGR03723">
    <property type="entry name" value="T6A_TsaD_YgjD"/>
    <property type="match status" value="1"/>
</dbReference>
<dbReference type="PANTHER" id="PTHR11735">
    <property type="entry name" value="TRNA N6-ADENOSINE THREONYLCARBAMOYLTRANSFERASE"/>
    <property type="match status" value="1"/>
</dbReference>
<dbReference type="PANTHER" id="PTHR11735:SF6">
    <property type="entry name" value="TRNA N6-ADENOSINE THREONYLCARBAMOYLTRANSFERASE, MITOCHONDRIAL"/>
    <property type="match status" value="1"/>
</dbReference>
<dbReference type="Pfam" id="PF00814">
    <property type="entry name" value="TsaD"/>
    <property type="match status" value="1"/>
</dbReference>
<dbReference type="PRINTS" id="PR00789">
    <property type="entry name" value="OSIALOPTASE"/>
</dbReference>
<dbReference type="SUPFAM" id="SSF53067">
    <property type="entry name" value="Actin-like ATPase domain"/>
    <property type="match status" value="1"/>
</dbReference>
<proteinExistence type="inferred from homology"/>
<sequence length="340" mass="35227">MLVLAIETSCDETAAALVDGGRRILSSVVSSQVAIHAEYGGVVPEIASRKHLEMISPVISQALAEAGVSFGDIQGVAVTRGPGLSGALLVGLSAAKAIACARGIPFVGVHHIEGHLFAPFLERPVEFPFLALVVSGGHTHLYLVEGFGRYRTLGRTLDDAAGEAFDKSAKIMGLPYPGGARIDAMAQEGSPGAIRLPRPLLADGGLNFSFSGLKTAMLNRITKHPVSIPGAEANDLCASFQQAVCDVLVAKTAAALERTGVTRLVVAGGVACNSGLRRSMQALASGLSIDLRIPAPALCGDNAAMLAVPGNHYLEQGHASELSMDVTATWDMDRVGEGRS</sequence>
<organism>
    <name type="scientific">Pelobacter propionicus (strain DSM 2379 / NBRC 103807 / OttBd1)</name>
    <dbReference type="NCBI Taxonomy" id="338966"/>
    <lineage>
        <taxon>Bacteria</taxon>
        <taxon>Pseudomonadati</taxon>
        <taxon>Thermodesulfobacteriota</taxon>
        <taxon>Desulfuromonadia</taxon>
        <taxon>Desulfuromonadales</taxon>
        <taxon>Desulfuromonadaceae</taxon>
        <taxon>Pelobacter</taxon>
    </lineage>
</organism>
<evidence type="ECO:0000255" key="1">
    <source>
        <dbReference type="HAMAP-Rule" id="MF_01445"/>
    </source>
</evidence>
<keyword id="KW-0012">Acyltransferase</keyword>
<keyword id="KW-0963">Cytoplasm</keyword>
<keyword id="KW-0408">Iron</keyword>
<keyword id="KW-0479">Metal-binding</keyword>
<keyword id="KW-1185">Reference proteome</keyword>
<keyword id="KW-0808">Transferase</keyword>
<keyword id="KW-0819">tRNA processing</keyword>
<reference key="1">
    <citation type="submission" date="2006-10" db="EMBL/GenBank/DDBJ databases">
        <title>Complete sequence of chromosome of Pelobacter propionicus DSM 2379.</title>
        <authorList>
            <consortium name="US DOE Joint Genome Institute"/>
            <person name="Copeland A."/>
            <person name="Lucas S."/>
            <person name="Lapidus A."/>
            <person name="Barry K."/>
            <person name="Detter J.C."/>
            <person name="Glavina del Rio T."/>
            <person name="Hammon N."/>
            <person name="Israni S."/>
            <person name="Dalin E."/>
            <person name="Tice H."/>
            <person name="Pitluck S."/>
            <person name="Saunders E."/>
            <person name="Brettin T."/>
            <person name="Bruce D."/>
            <person name="Han C."/>
            <person name="Tapia R."/>
            <person name="Schmutz J."/>
            <person name="Larimer F."/>
            <person name="Land M."/>
            <person name="Hauser L."/>
            <person name="Kyrpides N."/>
            <person name="Kim E."/>
            <person name="Lovley D."/>
            <person name="Richardson P."/>
        </authorList>
    </citation>
    <scope>NUCLEOTIDE SEQUENCE [LARGE SCALE GENOMIC DNA]</scope>
    <source>
        <strain>DSM 2379 / NBRC 103807 / OttBd1</strain>
    </source>
</reference>
<comment type="function">
    <text evidence="1">Required for the formation of a threonylcarbamoyl group on adenosine at position 37 (t(6)A37) in tRNAs that read codons beginning with adenine. Is involved in the transfer of the threonylcarbamoyl moiety of threonylcarbamoyl-AMP (TC-AMP) to the N6 group of A37, together with TsaE and TsaB. TsaD likely plays a direct catalytic role in this reaction.</text>
</comment>
<comment type="catalytic activity">
    <reaction evidence="1">
        <text>L-threonylcarbamoyladenylate + adenosine(37) in tRNA = N(6)-L-threonylcarbamoyladenosine(37) in tRNA + AMP + H(+)</text>
        <dbReference type="Rhea" id="RHEA:37059"/>
        <dbReference type="Rhea" id="RHEA-COMP:10162"/>
        <dbReference type="Rhea" id="RHEA-COMP:10163"/>
        <dbReference type="ChEBI" id="CHEBI:15378"/>
        <dbReference type="ChEBI" id="CHEBI:73682"/>
        <dbReference type="ChEBI" id="CHEBI:74411"/>
        <dbReference type="ChEBI" id="CHEBI:74418"/>
        <dbReference type="ChEBI" id="CHEBI:456215"/>
        <dbReference type="EC" id="2.3.1.234"/>
    </reaction>
</comment>
<comment type="cofactor">
    <cofactor evidence="1">
        <name>Fe(2+)</name>
        <dbReference type="ChEBI" id="CHEBI:29033"/>
    </cofactor>
    <text evidence="1">Binds 1 Fe(2+) ion per subunit.</text>
</comment>
<comment type="subcellular location">
    <subcellularLocation>
        <location evidence="1">Cytoplasm</location>
    </subcellularLocation>
</comment>
<comment type="similarity">
    <text evidence="1">Belongs to the KAE1 / TsaD family.</text>
</comment>